<gene>
    <name evidence="1" type="primary">coaD</name>
    <name type="ordered locus">A9601_09771</name>
</gene>
<name>COAD_PROMS</name>
<organism>
    <name type="scientific">Prochlorococcus marinus (strain AS9601)</name>
    <dbReference type="NCBI Taxonomy" id="146891"/>
    <lineage>
        <taxon>Bacteria</taxon>
        <taxon>Bacillati</taxon>
        <taxon>Cyanobacteriota</taxon>
        <taxon>Cyanophyceae</taxon>
        <taxon>Synechococcales</taxon>
        <taxon>Prochlorococcaceae</taxon>
        <taxon>Prochlorococcus</taxon>
    </lineage>
</organism>
<keyword id="KW-0067">ATP-binding</keyword>
<keyword id="KW-0173">Coenzyme A biosynthesis</keyword>
<keyword id="KW-0963">Cytoplasm</keyword>
<keyword id="KW-0460">Magnesium</keyword>
<keyword id="KW-0547">Nucleotide-binding</keyword>
<keyword id="KW-0548">Nucleotidyltransferase</keyword>
<keyword id="KW-0808">Transferase</keyword>
<sequence>MKILYPGTFDPLTNGHLDLIERAEKIFGNLVVAVLENTSKTPTFNLERRIIQIKNSLSHLPNIEVISYSGLTVDCANDLKANLILRGLRAMSDFEYELQIAHTNKSLNNDIETIFLSTNTNYSFLSSSLVKEVAKFGGEINHMVPPPVEKDLKEYFK</sequence>
<evidence type="ECO:0000255" key="1">
    <source>
        <dbReference type="HAMAP-Rule" id="MF_00151"/>
    </source>
</evidence>
<reference key="1">
    <citation type="journal article" date="2007" name="PLoS Genet.">
        <title>Patterns and implications of gene gain and loss in the evolution of Prochlorococcus.</title>
        <authorList>
            <person name="Kettler G.C."/>
            <person name="Martiny A.C."/>
            <person name="Huang K."/>
            <person name="Zucker J."/>
            <person name="Coleman M.L."/>
            <person name="Rodrigue S."/>
            <person name="Chen F."/>
            <person name="Lapidus A."/>
            <person name="Ferriera S."/>
            <person name="Johnson J."/>
            <person name="Steglich C."/>
            <person name="Church G.M."/>
            <person name="Richardson P."/>
            <person name="Chisholm S.W."/>
        </authorList>
    </citation>
    <scope>NUCLEOTIDE SEQUENCE [LARGE SCALE GENOMIC DNA]</scope>
    <source>
        <strain>AS9601</strain>
    </source>
</reference>
<proteinExistence type="inferred from homology"/>
<accession>A2BR50</accession>
<dbReference type="EC" id="2.7.7.3" evidence="1"/>
<dbReference type="EMBL" id="CP000551">
    <property type="protein sequence ID" value="ABM70261.1"/>
    <property type="molecule type" value="Genomic_DNA"/>
</dbReference>
<dbReference type="RefSeq" id="WP_011818416.1">
    <property type="nucleotide sequence ID" value="NC_008816.1"/>
</dbReference>
<dbReference type="SMR" id="A2BR50"/>
<dbReference type="STRING" id="146891.A9601_09771"/>
<dbReference type="KEGG" id="pmb:A9601_09771"/>
<dbReference type="eggNOG" id="COG0669">
    <property type="taxonomic scope" value="Bacteria"/>
</dbReference>
<dbReference type="HOGENOM" id="CLU_100149_0_1_3"/>
<dbReference type="OrthoDB" id="9806661at2"/>
<dbReference type="UniPathway" id="UPA00241">
    <property type="reaction ID" value="UER00355"/>
</dbReference>
<dbReference type="Proteomes" id="UP000002590">
    <property type="component" value="Chromosome"/>
</dbReference>
<dbReference type="GO" id="GO:0005737">
    <property type="term" value="C:cytoplasm"/>
    <property type="evidence" value="ECO:0007669"/>
    <property type="project" value="UniProtKB-SubCell"/>
</dbReference>
<dbReference type="GO" id="GO:0005524">
    <property type="term" value="F:ATP binding"/>
    <property type="evidence" value="ECO:0007669"/>
    <property type="project" value="UniProtKB-KW"/>
</dbReference>
<dbReference type="GO" id="GO:0004595">
    <property type="term" value="F:pantetheine-phosphate adenylyltransferase activity"/>
    <property type="evidence" value="ECO:0007669"/>
    <property type="project" value="UniProtKB-UniRule"/>
</dbReference>
<dbReference type="GO" id="GO:0015937">
    <property type="term" value="P:coenzyme A biosynthetic process"/>
    <property type="evidence" value="ECO:0007669"/>
    <property type="project" value="UniProtKB-UniRule"/>
</dbReference>
<dbReference type="CDD" id="cd02163">
    <property type="entry name" value="PPAT"/>
    <property type="match status" value="1"/>
</dbReference>
<dbReference type="Gene3D" id="3.40.50.620">
    <property type="entry name" value="HUPs"/>
    <property type="match status" value="1"/>
</dbReference>
<dbReference type="HAMAP" id="MF_00151">
    <property type="entry name" value="PPAT_bact"/>
    <property type="match status" value="1"/>
</dbReference>
<dbReference type="InterPro" id="IPR004821">
    <property type="entry name" value="Cyt_trans-like"/>
</dbReference>
<dbReference type="InterPro" id="IPR001980">
    <property type="entry name" value="PPAT"/>
</dbReference>
<dbReference type="InterPro" id="IPR014729">
    <property type="entry name" value="Rossmann-like_a/b/a_fold"/>
</dbReference>
<dbReference type="NCBIfam" id="TIGR01510">
    <property type="entry name" value="coaD_prev_kdtB"/>
    <property type="match status" value="1"/>
</dbReference>
<dbReference type="NCBIfam" id="TIGR00125">
    <property type="entry name" value="cyt_tran_rel"/>
    <property type="match status" value="1"/>
</dbReference>
<dbReference type="PANTHER" id="PTHR21342">
    <property type="entry name" value="PHOSPHOPANTETHEINE ADENYLYLTRANSFERASE"/>
    <property type="match status" value="1"/>
</dbReference>
<dbReference type="PANTHER" id="PTHR21342:SF1">
    <property type="entry name" value="PHOSPHOPANTETHEINE ADENYLYLTRANSFERASE"/>
    <property type="match status" value="1"/>
</dbReference>
<dbReference type="Pfam" id="PF01467">
    <property type="entry name" value="CTP_transf_like"/>
    <property type="match status" value="1"/>
</dbReference>
<dbReference type="PRINTS" id="PR01020">
    <property type="entry name" value="LPSBIOSNTHSS"/>
</dbReference>
<dbReference type="SUPFAM" id="SSF52374">
    <property type="entry name" value="Nucleotidylyl transferase"/>
    <property type="match status" value="1"/>
</dbReference>
<comment type="function">
    <text evidence="1">Reversibly transfers an adenylyl group from ATP to 4'-phosphopantetheine, yielding dephospho-CoA (dPCoA) and pyrophosphate.</text>
</comment>
<comment type="catalytic activity">
    <reaction evidence="1">
        <text>(R)-4'-phosphopantetheine + ATP + H(+) = 3'-dephospho-CoA + diphosphate</text>
        <dbReference type="Rhea" id="RHEA:19801"/>
        <dbReference type="ChEBI" id="CHEBI:15378"/>
        <dbReference type="ChEBI" id="CHEBI:30616"/>
        <dbReference type="ChEBI" id="CHEBI:33019"/>
        <dbReference type="ChEBI" id="CHEBI:57328"/>
        <dbReference type="ChEBI" id="CHEBI:61723"/>
        <dbReference type="EC" id="2.7.7.3"/>
    </reaction>
</comment>
<comment type="cofactor">
    <cofactor evidence="1">
        <name>Mg(2+)</name>
        <dbReference type="ChEBI" id="CHEBI:18420"/>
    </cofactor>
</comment>
<comment type="pathway">
    <text evidence="1">Cofactor biosynthesis; coenzyme A biosynthesis; CoA from (R)-pantothenate: step 4/5.</text>
</comment>
<comment type="subunit">
    <text evidence="1">Homohexamer.</text>
</comment>
<comment type="subcellular location">
    <subcellularLocation>
        <location evidence="1">Cytoplasm</location>
    </subcellularLocation>
</comment>
<comment type="similarity">
    <text evidence="1">Belongs to the bacterial CoaD family.</text>
</comment>
<protein>
    <recommendedName>
        <fullName evidence="1">Phosphopantetheine adenylyltransferase</fullName>
        <ecNumber evidence="1">2.7.7.3</ecNumber>
    </recommendedName>
    <alternativeName>
        <fullName evidence="1">Dephospho-CoA pyrophosphorylase</fullName>
    </alternativeName>
    <alternativeName>
        <fullName evidence="1">Pantetheine-phosphate adenylyltransferase</fullName>
        <shortName evidence="1">PPAT</shortName>
    </alternativeName>
</protein>
<feature type="chain" id="PRO_1000011202" description="Phosphopantetheine adenylyltransferase">
    <location>
        <begin position="1"/>
        <end position="157"/>
    </location>
</feature>
<feature type="binding site" evidence="1">
    <location>
        <begin position="8"/>
        <end position="9"/>
    </location>
    <ligand>
        <name>ATP</name>
        <dbReference type="ChEBI" id="CHEBI:30616"/>
    </ligand>
</feature>
<feature type="binding site" evidence="1">
    <location>
        <position position="8"/>
    </location>
    <ligand>
        <name>substrate</name>
    </ligand>
</feature>
<feature type="binding site" evidence="1">
    <location>
        <position position="16"/>
    </location>
    <ligand>
        <name>ATP</name>
        <dbReference type="ChEBI" id="CHEBI:30616"/>
    </ligand>
</feature>
<feature type="binding site" evidence="1">
    <location>
        <position position="40"/>
    </location>
    <ligand>
        <name>substrate</name>
    </ligand>
</feature>
<feature type="binding site" evidence="1">
    <location>
        <position position="72"/>
    </location>
    <ligand>
        <name>substrate</name>
    </ligand>
</feature>
<feature type="binding site" evidence="1">
    <location>
        <position position="86"/>
    </location>
    <ligand>
        <name>substrate</name>
    </ligand>
</feature>
<feature type="binding site" evidence="1">
    <location>
        <begin position="87"/>
        <end position="89"/>
    </location>
    <ligand>
        <name>ATP</name>
        <dbReference type="ChEBI" id="CHEBI:30616"/>
    </ligand>
</feature>
<feature type="binding site" evidence="1">
    <location>
        <position position="97"/>
    </location>
    <ligand>
        <name>ATP</name>
        <dbReference type="ChEBI" id="CHEBI:30616"/>
    </ligand>
</feature>
<feature type="binding site" evidence="1">
    <location>
        <begin position="122"/>
        <end position="128"/>
    </location>
    <ligand>
        <name>ATP</name>
        <dbReference type="ChEBI" id="CHEBI:30616"/>
    </ligand>
</feature>
<feature type="site" description="Transition state stabilizer" evidence="1">
    <location>
        <position position="16"/>
    </location>
</feature>